<protein>
    <recommendedName>
        <fullName evidence="1">Penicillin-binding protein activator LpoA</fullName>
        <shortName evidence="1">PBP activator LpoA</shortName>
    </recommendedName>
</protein>
<evidence type="ECO:0000255" key="1">
    <source>
        <dbReference type="HAMAP-Rule" id="MF_01890"/>
    </source>
</evidence>
<evidence type="ECO:0000256" key="2">
    <source>
        <dbReference type="SAM" id="MobiDB-lite"/>
    </source>
</evidence>
<evidence type="ECO:0000305" key="3"/>
<dbReference type="EMBL" id="CP000653">
    <property type="protein sequence ID" value="ABP62242.1"/>
    <property type="status" value="ALT_INIT"/>
    <property type="molecule type" value="Genomic_DNA"/>
</dbReference>
<dbReference type="RefSeq" id="WP_041689536.1">
    <property type="nucleotide sequence ID" value="NC_009436.1"/>
</dbReference>
<dbReference type="SMR" id="A4WEW2"/>
<dbReference type="STRING" id="399742.Ent638_3584"/>
<dbReference type="KEGG" id="ent:Ent638_3584"/>
<dbReference type="eggNOG" id="COG3107">
    <property type="taxonomic scope" value="Bacteria"/>
</dbReference>
<dbReference type="HOGENOM" id="CLU_026091_1_1_6"/>
<dbReference type="OrthoDB" id="6708821at2"/>
<dbReference type="Proteomes" id="UP000000230">
    <property type="component" value="Chromosome"/>
</dbReference>
<dbReference type="GO" id="GO:0031241">
    <property type="term" value="C:periplasmic side of cell outer membrane"/>
    <property type="evidence" value="ECO:0007669"/>
    <property type="project" value="UniProtKB-UniRule"/>
</dbReference>
<dbReference type="GO" id="GO:0030234">
    <property type="term" value="F:enzyme regulator activity"/>
    <property type="evidence" value="ECO:0007669"/>
    <property type="project" value="UniProtKB-UniRule"/>
</dbReference>
<dbReference type="GO" id="GO:0009252">
    <property type="term" value="P:peptidoglycan biosynthetic process"/>
    <property type="evidence" value="ECO:0007669"/>
    <property type="project" value="UniProtKB-UniRule"/>
</dbReference>
<dbReference type="GO" id="GO:0008360">
    <property type="term" value="P:regulation of cell shape"/>
    <property type="evidence" value="ECO:0007669"/>
    <property type="project" value="UniProtKB-KW"/>
</dbReference>
<dbReference type="CDD" id="cd06339">
    <property type="entry name" value="PBP1_YraM_LppC_lipoprotein-like"/>
    <property type="match status" value="1"/>
</dbReference>
<dbReference type="Gene3D" id="1.25.40.650">
    <property type="match status" value="1"/>
</dbReference>
<dbReference type="Gene3D" id="3.40.50.2300">
    <property type="match status" value="2"/>
</dbReference>
<dbReference type="Gene3D" id="1.25.40.10">
    <property type="entry name" value="Tetratricopeptide repeat domain"/>
    <property type="match status" value="1"/>
</dbReference>
<dbReference type="HAMAP" id="MF_01890">
    <property type="entry name" value="LpoA"/>
    <property type="match status" value="1"/>
</dbReference>
<dbReference type="InterPro" id="IPR007443">
    <property type="entry name" value="LpoA"/>
</dbReference>
<dbReference type="InterPro" id="IPR028082">
    <property type="entry name" value="Peripla_BP_I"/>
</dbReference>
<dbReference type="InterPro" id="IPR011990">
    <property type="entry name" value="TPR-like_helical_dom_sf"/>
</dbReference>
<dbReference type="PANTHER" id="PTHR38038">
    <property type="entry name" value="PENICILLIN-BINDING PROTEIN ACTIVATOR LPOA"/>
    <property type="match status" value="1"/>
</dbReference>
<dbReference type="PANTHER" id="PTHR38038:SF1">
    <property type="entry name" value="PENICILLIN-BINDING PROTEIN ACTIVATOR LPOA"/>
    <property type="match status" value="1"/>
</dbReference>
<dbReference type="Pfam" id="PF04348">
    <property type="entry name" value="LppC"/>
    <property type="match status" value="2"/>
</dbReference>
<dbReference type="SUPFAM" id="SSF53822">
    <property type="entry name" value="Periplasmic binding protein-like I"/>
    <property type="match status" value="1"/>
</dbReference>
<accession>A4WEW2</accession>
<organism>
    <name type="scientific">Enterobacter sp. (strain 638)</name>
    <dbReference type="NCBI Taxonomy" id="399742"/>
    <lineage>
        <taxon>Bacteria</taxon>
        <taxon>Pseudomonadati</taxon>
        <taxon>Pseudomonadota</taxon>
        <taxon>Gammaproteobacteria</taxon>
        <taxon>Enterobacterales</taxon>
        <taxon>Enterobacteriaceae</taxon>
        <taxon>Enterobacter</taxon>
    </lineage>
</organism>
<name>LPOA_ENT38</name>
<gene>
    <name evidence="1" type="primary">lpoA</name>
    <name type="ordered locus">Ent638_3584</name>
</gene>
<reference key="1">
    <citation type="journal article" date="2010" name="PLoS Genet.">
        <title>Genome sequence of the plant growth promoting endophytic bacterium Enterobacter sp. 638.</title>
        <authorList>
            <person name="Taghavi S."/>
            <person name="van der Lelie D."/>
            <person name="Hoffman A."/>
            <person name="Zhang Y.B."/>
            <person name="Walla M.D."/>
            <person name="Vangronsveld J."/>
            <person name="Newman L."/>
            <person name="Monchy S."/>
        </authorList>
    </citation>
    <scope>NUCLEOTIDE SEQUENCE [LARGE SCALE GENOMIC DNA]</scope>
    <source>
        <strain>638</strain>
    </source>
</reference>
<feature type="signal peptide" evidence="1">
    <location>
        <begin position="1"/>
        <end position="26"/>
    </location>
</feature>
<feature type="chain" id="PRO_0000405930" description="Penicillin-binding protein activator LpoA">
    <location>
        <begin position="27"/>
        <end position="721"/>
    </location>
</feature>
<feature type="region of interest" description="Disordered" evidence="2">
    <location>
        <begin position="316"/>
        <end position="393"/>
    </location>
</feature>
<feature type="compositionally biased region" description="Polar residues" evidence="2">
    <location>
        <begin position="316"/>
        <end position="330"/>
    </location>
</feature>
<feature type="compositionally biased region" description="Low complexity" evidence="2">
    <location>
        <begin position="331"/>
        <end position="393"/>
    </location>
</feature>
<feature type="lipid moiety-binding region" description="N-palmitoyl cysteine" evidence="1">
    <location>
        <position position="27"/>
    </location>
</feature>
<feature type="lipid moiety-binding region" description="S-diacylglycerol cysteine" evidence="1">
    <location>
        <position position="27"/>
    </location>
</feature>
<comment type="function">
    <text evidence="1">Regulator of peptidoglycan synthesis that is essential for the function of penicillin-binding protein 1A (PBP1a).</text>
</comment>
<comment type="subunit">
    <text evidence="1">Interacts with PBP1a.</text>
</comment>
<comment type="subcellular location">
    <subcellularLocation>
        <location evidence="1">Cell outer membrane</location>
        <topology evidence="1">Lipid-anchor</topology>
        <orientation evidence="1">Periplasmic side</orientation>
    </subcellularLocation>
</comment>
<comment type="similarity">
    <text evidence="1">Belongs to the LpoA family.</text>
</comment>
<comment type="sequence caution" evidence="3">
    <conflict type="erroneous initiation">
        <sequence resource="EMBL-CDS" id="ABP62242"/>
    </conflict>
    <text>Truncated N-terminus.</text>
</comment>
<proteinExistence type="inferred from homology"/>
<sequence>MVPLTFLRTKASRSLPIMLAALIFAGCGTQAPDQTAAHMQGSAQADSGFYLQQMSQSSNDTKTNWQLLAIRALLNEGKTQQAVDLYNQLPQELNNTQRGEQSLLAAELKIAQKEYPAAKKLLADIDTKALENNQQARYWQAVIAAEQGRPSLPLLRALIAQEPLLSGADKQKNIDTTWQALSSMTPEQSQALVINADENVLQGWLDLQQMWFNNRSDPKMLKAGITDWQTRYPQNPGAKMLPTQLVNVQNFQPASVSKIALLLPLNGQAAVFGRTIQQGFEAAKNGTTAVAGNAVPAQAAQAANVNDVISPSAVETSDLTSAQAPAQGTMQNPVTAPTTPPATTQAPAETAAPAEAQTPVVPQAAPATDAATAQPQTTTPDQQPAAQPQAVAATTANPGAELKIYDTSSQPLDQVLAQVQKDGASIVVGPLLKNNVEELMKSNTSLNVLALNQPEQVQNRANICYFALSPEDEARDAARHIHEQGKQAPLLLTPRSALGDRVATAFAQEWQQLGGNIVLQQKFGSTSELRAGVNGGSGIALTGSPVSASLPQQQGVTIGGLTIPAPPTDAQISGGGKVDAAYIVATPEEIAFIKPMIAMRNGSQSGVTLYASSRSAQGTAGPDFRLEMDGLQYSEIPMLAGSNPALMQQALSSVRNDYSLARLYAMGVDAWALANHFTQMRQVPGFELNGNTGDLTATQDCVINRKLSWLKYQQGQIVPAS</sequence>
<keyword id="KW-0998">Cell outer membrane</keyword>
<keyword id="KW-0133">Cell shape</keyword>
<keyword id="KW-0449">Lipoprotein</keyword>
<keyword id="KW-0472">Membrane</keyword>
<keyword id="KW-0564">Palmitate</keyword>
<keyword id="KW-0573">Peptidoglycan synthesis</keyword>
<keyword id="KW-0732">Signal</keyword>